<feature type="chain" id="PRO_0000460815" description="Choline/ethanolamine transporter flvcr2b">
    <location>
        <begin position="1"/>
        <end position="485"/>
    </location>
</feature>
<feature type="topological domain" description="Cytoplasmic" evidence="1">
    <location>
        <begin position="1"/>
        <end position="46"/>
    </location>
</feature>
<feature type="transmembrane region" description="Helical; Name=TM1" evidence="1">
    <location>
        <begin position="47"/>
        <end position="71"/>
    </location>
</feature>
<feature type="topological domain" description="Extracellular" evidence="1">
    <location>
        <begin position="72"/>
        <end position="89"/>
    </location>
</feature>
<feature type="transmembrane region" description="Helical; Name=TM2" evidence="1">
    <location>
        <begin position="90"/>
        <end position="117"/>
    </location>
</feature>
<feature type="topological domain" description="Cytoplasmic" evidence="1">
    <location>
        <begin position="118"/>
        <end position="119"/>
    </location>
</feature>
<feature type="transmembrane region" description="Helical; Name=TM3" evidence="1">
    <location>
        <begin position="120"/>
        <end position="139"/>
    </location>
</feature>
<feature type="topological domain" description="Extracellular" evidence="1">
    <location>
        <begin position="140"/>
        <end position="146"/>
    </location>
</feature>
<feature type="transmembrane region" description="Helical; Name=TM4" evidence="1">
    <location>
        <begin position="147"/>
        <end position="175"/>
    </location>
</feature>
<feature type="topological domain" description="Cytoplasmic" evidence="1">
    <location>
        <begin position="176"/>
        <end position="180"/>
    </location>
</feature>
<feature type="transmembrane region" description="Helical; Name=TM5" evidence="1">
    <location>
        <begin position="181"/>
        <end position="206"/>
    </location>
</feature>
<feature type="topological domain" description="Extracellular" evidence="1">
    <location>
        <begin position="207"/>
        <end position="211"/>
    </location>
</feature>
<feature type="transmembrane region" description="Helical; Name=TM6" evidence="1">
    <location>
        <begin position="212"/>
        <end position="241"/>
    </location>
</feature>
<feature type="topological domain" description="Cytoplasmic" evidence="1">
    <location>
        <begin position="242"/>
        <end position="277"/>
    </location>
</feature>
<feature type="transmembrane region" description="Helical; Name=TM7" evidence="1">
    <location>
        <begin position="278"/>
        <end position="308"/>
    </location>
</feature>
<feature type="topological domain" description="Extracellular" evidence="1">
    <location>
        <begin position="309"/>
        <end position="312"/>
    </location>
</feature>
<feature type="transmembrane region" description="Helical; Name=TM8" evidence="1">
    <location>
        <begin position="313"/>
        <end position="341"/>
    </location>
</feature>
<feature type="topological domain" description="Cytoplasmic" evidence="1">
    <location>
        <begin position="342"/>
        <end position="343"/>
    </location>
</feature>
<feature type="transmembrane region" description="Helical; Name=TM9" evidence="1">
    <location>
        <begin position="344"/>
        <end position="366"/>
    </location>
</feature>
<feature type="topological domain" description="Extracellular" evidence="1">
    <location>
        <begin position="367"/>
        <end position="369"/>
    </location>
</feature>
<feature type="transmembrane region" description="Helical; Name=TM10" evidence="1">
    <location>
        <begin position="370"/>
        <end position="399"/>
    </location>
</feature>
<feature type="topological domain" description="Cytoplasmic" evidence="1">
    <location>
        <begin position="400"/>
        <end position="407"/>
    </location>
</feature>
<feature type="transmembrane region" description="Helical; Name=TM11" evidence="1">
    <location>
        <begin position="408"/>
        <end position="433"/>
    </location>
</feature>
<feature type="topological domain" description="Extracellular" evidence="1">
    <location>
        <begin position="434"/>
        <end position="435"/>
    </location>
</feature>
<feature type="transmembrane region" description="Helical; Name=TM12" evidence="1">
    <location>
        <begin position="436"/>
        <end position="458"/>
    </location>
</feature>
<feature type="topological domain" description="Cytoplasmic" evidence="1">
    <location>
        <begin position="459"/>
        <end position="485"/>
    </location>
</feature>
<feature type="binding site" evidence="1">
    <location>
        <position position="68"/>
    </location>
    <ligand>
        <name>choline</name>
        <dbReference type="ChEBI" id="CHEBI:15354"/>
    </ligand>
</feature>
<feature type="binding site" evidence="1">
    <location>
        <position position="72"/>
    </location>
    <ligand>
        <name>choline</name>
        <dbReference type="ChEBI" id="CHEBI:15354"/>
    </ligand>
</feature>
<feature type="binding site" evidence="2">
    <location>
        <position position="161"/>
    </location>
    <ligand>
        <name>choline</name>
        <dbReference type="ChEBI" id="CHEBI:15354"/>
    </ligand>
</feature>
<feature type="binding site" evidence="1">
    <location>
        <position position="165"/>
    </location>
    <ligand>
        <name>choline</name>
        <dbReference type="ChEBI" id="CHEBI:15354"/>
    </ligand>
</feature>
<feature type="binding site" evidence="1">
    <location>
        <position position="295"/>
    </location>
    <ligand>
        <name>choline</name>
        <dbReference type="ChEBI" id="CHEBI:15354"/>
    </ligand>
</feature>
<feature type="binding site" evidence="1">
    <location>
        <position position="417"/>
    </location>
    <ligand>
        <name>choline</name>
        <dbReference type="ChEBI" id="CHEBI:15354"/>
    </ligand>
</feature>
<feature type="splice variant" id="VSP_062390" description="In isoform 2.">
    <original>DHLDTSPTQTRF</original>
    <variation>AALGRSYVQDHSGTTLLPSTHM</variation>
    <location>
        <begin position="474"/>
        <end position="485"/>
    </location>
</feature>
<protein>
    <recommendedName>
        <fullName evidence="6">Choline/ethanolamine transporter flvcr2b</fullName>
    </recommendedName>
    <alternativeName>
        <fullName evidence="6">Feline leukemia virus subgroup C receptor-related protein 2 homolog B</fullName>
    </alternativeName>
    <alternativeName>
        <fullName evidence="6">Heme transporter flvcr2b</fullName>
    </alternativeName>
    <alternativeName>
        <fullName evidence="6">Major facilitator superfamily domain containing 7C-b</fullName>
    </alternativeName>
</protein>
<organism>
    <name type="scientific">Danio rerio</name>
    <name type="common">Zebrafish</name>
    <name type="synonym">Brachydanio rerio</name>
    <dbReference type="NCBI Taxonomy" id="7955"/>
    <lineage>
        <taxon>Eukaryota</taxon>
        <taxon>Metazoa</taxon>
        <taxon>Chordata</taxon>
        <taxon>Craniata</taxon>
        <taxon>Vertebrata</taxon>
        <taxon>Euteleostomi</taxon>
        <taxon>Actinopterygii</taxon>
        <taxon>Neopterygii</taxon>
        <taxon>Teleostei</taxon>
        <taxon>Ostariophysi</taxon>
        <taxon>Cypriniformes</taxon>
        <taxon>Danionidae</taxon>
        <taxon>Danioninae</taxon>
        <taxon>Danio</taxon>
    </lineage>
</organism>
<gene>
    <name evidence="7" type="primary">flvcr2b</name>
    <name evidence="5" type="synonym">Mfsd7c-b</name>
</gene>
<comment type="function">
    <text evidence="1 2 4">Choline uniporter that specifically mediates choline uptake at the blood-brain-barrier (PubMed:38302740). Responsible for the majority of choline uptake across the blood-brain-barrier from the circulation into the brain (By similarity). Choline, a nutrient critical for brain development, is a precursor of phosphatidylcholine, as well as betaine (By similarity). Also mediates transport of ethanolamine (By similarity). Choline and ethanolamine transport is not coupled with proton transport and is exclusively driven by the choline gradient across the plasma membrane (By similarity). Also acts as a heme b transporter (By similarity).</text>
</comment>
<comment type="catalytic activity">
    <reaction evidence="4">
        <text>choline(out) = choline(in)</text>
        <dbReference type="Rhea" id="RHEA:32751"/>
        <dbReference type="ChEBI" id="CHEBI:15354"/>
    </reaction>
</comment>
<comment type="catalytic activity">
    <reaction evidence="2">
        <text>ethanolamine(in) = ethanolamine(out)</text>
        <dbReference type="Rhea" id="RHEA:32747"/>
        <dbReference type="ChEBI" id="CHEBI:57603"/>
    </reaction>
</comment>
<comment type="catalytic activity">
    <reaction evidence="2">
        <text>heme b(in) = heme b(out)</text>
        <dbReference type="Rhea" id="RHEA:75443"/>
        <dbReference type="ChEBI" id="CHEBI:60344"/>
    </reaction>
</comment>
<comment type="subcellular location">
    <subcellularLocation>
        <location evidence="1">Cell membrane</location>
        <topology evidence="1">Multi-pass membrane protein</topology>
    </subcellularLocation>
    <subcellularLocation>
        <location evidence="1">Mitochondrion membrane</location>
        <topology evidence="3">Multi-pass membrane protein</topology>
    </subcellularLocation>
    <subcellularLocation>
        <location evidence="2">Endoplasmic reticulum membrane</location>
        <topology evidence="3">Multi-pass membrane protein</topology>
    </subcellularLocation>
</comment>
<comment type="alternative products">
    <event type="alternative splicing"/>
    <isoform>
        <id>A0A8M9Q308-1</id>
        <name>1</name>
        <sequence type="displayed"/>
    </isoform>
    <isoform>
        <id>A0A8M9Q308-2</id>
        <name>2</name>
        <sequence type="described" ref="VSP_062390"/>
    </isoform>
</comment>
<comment type="similarity">
    <text evidence="6">Belongs to the major facilitator superfamily. Feline leukemia virus subgroup C receptor (TC 2.A.1.28.1) family.</text>
</comment>
<keyword id="KW-0025">Alternative splicing</keyword>
<keyword id="KW-1003">Cell membrane</keyword>
<keyword id="KW-0256">Endoplasmic reticulum</keyword>
<keyword id="KW-0472">Membrane</keyword>
<keyword id="KW-0496">Mitochondrion</keyword>
<keyword id="KW-1185">Reference proteome</keyword>
<keyword id="KW-0812">Transmembrane</keyword>
<keyword id="KW-1133">Transmembrane helix</keyword>
<keyword id="KW-0813">Transport</keyword>
<dbReference type="EMBL" id="BX957286">
    <property type="status" value="NOT_ANNOTATED_CDS"/>
    <property type="molecule type" value="Genomic_DNA"/>
</dbReference>
<dbReference type="RefSeq" id="XP_021329055.1">
    <molecule id="A0A8M9Q308-2"/>
    <property type="nucleotide sequence ID" value="XM_021473380.2"/>
</dbReference>
<dbReference type="RefSeq" id="XP_021329056.1">
    <molecule id="A0A8M9Q308-1"/>
    <property type="nucleotide sequence ID" value="XM_021473381.2"/>
</dbReference>
<dbReference type="SMR" id="A0A8M9Q308"/>
<dbReference type="PaxDb" id="7955-ENSDARP00000038667"/>
<dbReference type="GeneID" id="569329"/>
<dbReference type="AGR" id="ZFIN:ZDB-GENE-041210-312"/>
<dbReference type="ZFIN" id="ZDB-GENE-041210-312">
    <property type="gene designation" value="flvcr2b"/>
</dbReference>
<dbReference type="eggNOG" id="KOG2563">
    <property type="taxonomic scope" value="Eukaryota"/>
</dbReference>
<dbReference type="HOGENOM" id="CLU_023132_0_1_1"/>
<dbReference type="OMA" id="TRPGNIF"/>
<dbReference type="OrthoDB" id="422206at2759"/>
<dbReference type="TreeFam" id="TF314292"/>
<dbReference type="Proteomes" id="UP000000437">
    <property type="component" value="Alternate scaffold 20"/>
</dbReference>
<dbReference type="Bgee" id="ENSDARG00000031506">
    <property type="expression patterns" value="Expressed in liver and 22 other cell types or tissues"/>
</dbReference>
<dbReference type="GO" id="GO:0005789">
    <property type="term" value="C:endoplasmic reticulum membrane"/>
    <property type="evidence" value="ECO:0007669"/>
    <property type="project" value="UniProtKB-SubCell"/>
</dbReference>
<dbReference type="GO" id="GO:0031966">
    <property type="term" value="C:mitochondrial membrane"/>
    <property type="evidence" value="ECO:0007669"/>
    <property type="project" value="UniProtKB-SubCell"/>
</dbReference>
<dbReference type="GO" id="GO:0005886">
    <property type="term" value="C:plasma membrane"/>
    <property type="evidence" value="ECO:0000250"/>
    <property type="project" value="UniProtKB"/>
</dbReference>
<dbReference type="GO" id="GO:0015220">
    <property type="term" value="F:choline transmembrane transporter activity"/>
    <property type="evidence" value="ECO:0000314"/>
    <property type="project" value="UniProtKB"/>
</dbReference>
<dbReference type="GO" id="GO:0034228">
    <property type="term" value="F:ethanolamine transmembrane transporter activity"/>
    <property type="evidence" value="ECO:0000250"/>
    <property type="project" value="UniProtKB"/>
</dbReference>
<dbReference type="GO" id="GO:0150104">
    <property type="term" value="P:transport across blood-brain barrier"/>
    <property type="evidence" value="ECO:0000250"/>
    <property type="project" value="UniProtKB"/>
</dbReference>
<dbReference type="CDD" id="cd17456">
    <property type="entry name" value="MFS_FLVCR2"/>
    <property type="match status" value="1"/>
</dbReference>
<dbReference type="FunFam" id="1.20.1250.20:FF:000101">
    <property type="entry name" value="feline leukemia virus subgroup C receptor-related protein 2"/>
    <property type="match status" value="1"/>
</dbReference>
<dbReference type="FunFam" id="1.20.1250.20:FF:000092">
    <property type="entry name" value="Feline leukemia virus subgroup C receptor-related protein 2 isoform 1"/>
    <property type="match status" value="1"/>
</dbReference>
<dbReference type="Gene3D" id="1.20.1250.20">
    <property type="entry name" value="MFS general substrate transporter like domains"/>
    <property type="match status" value="2"/>
</dbReference>
<dbReference type="InterPro" id="IPR049680">
    <property type="entry name" value="FLVCR1-2_SLC49-like"/>
</dbReference>
<dbReference type="InterPro" id="IPR011701">
    <property type="entry name" value="MFS"/>
</dbReference>
<dbReference type="InterPro" id="IPR020846">
    <property type="entry name" value="MFS_dom"/>
</dbReference>
<dbReference type="InterPro" id="IPR036259">
    <property type="entry name" value="MFS_trans_sf"/>
</dbReference>
<dbReference type="PANTHER" id="PTHR10924:SF3">
    <property type="entry name" value="HEME TRANSPORTER FLVCR2"/>
    <property type="match status" value="1"/>
</dbReference>
<dbReference type="PANTHER" id="PTHR10924">
    <property type="entry name" value="MAJOR FACILITATOR SUPERFAMILY PROTEIN-RELATED"/>
    <property type="match status" value="1"/>
</dbReference>
<dbReference type="Pfam" id="PF07690">
    <property type="entry name" value="MFS_1"/>
    <property type="match status" value="1"/>
</dbReference>
<dbReference type="SUPFAM" id="SSF103473">
    <property type="entry name" value="MFS general substrate transporter"/>
    <property type="match status" value="1"/>
</dbReference>
<dbReference type="PROSITE" id="PS50850">
    <property type="entry name" value="MFS"/>
    <property type="match status" value="1"/>
</dbReference>
<accession>A0A8M9Q308</accession>
<accession>A0A8M1RMV1</accession>
<accession>A0A8M2B829</accession>
<accession>A0A8M9Q757</accession>
<accession>E9QH04</accession>
<proteinExistence type="inferred from homology"/>
<reference key="1">
    <citation type="journal article" date="2013" name="Nature">
        <title>The zebrafish reference genome sequence and its relationship to the human genome.</title>
        <authorList>
            <person name="Howe K."/>
            <person name="Clark M.D."/>
            <person name="Torroja C.F."/>
            <person name="Torrance J."/>
            <person name="Berthelot C."/>
            <person name="Muffato M."/>
            <person name="Collins J.E."/>
            <person name="Humphray S."/>
            <person name="McLaren K."/>
            <person name="Matthews L."/>
            <person name="McLaren S."/>
            <person name="Sealy I."/>
            <person name="Caccamo M."/>
            <person name="Churcher C."/>
            <person name="Scott C."/>
            <person name="Barrett J.C."/>
            <person name="Koch R."/>
            <person name="Rauch G.J."/>
            <person name="White S."/>
            <person name="Chow W."/>
            <person name="Kilian B."/>
            <person name="Quintais L.T."/>
            <person name="Guerra-Assuncao J.A."/>
            <person name="Zhou Y."/>
            <person name="Gu Y."/>
            <person name="Yen J."/>
            <person name="Vogel J.H."/>
            <person name="Eyre T."/>
            <person name="Redmond S."/>
            <person name="Banerjee R."/>
            <person name="Chi J."/>
            <person name="Fu B."/>
            <person name="Langley E."/>
            <person name="Maguire S.F."/>
            <person name="Laird G.K."/>
            <person name="Lloyd D."/>
            <person name="Kenyon E."/>
            <person name="Donaldson S."/>
            <person name="Sehra H."/>
            <person name="Almeida-King J."/>
            <person name="Loveland J."/>
            <person name="Trevanion S."/>
            <person name="Jones M."/>
            <person name="Quail M."/>
            <person name="Willey D."/>
            <person name="Hunt A."/>
            <person name="Burton J."/>
            <person name="Sims S."/>
            <person name="McLay K."/>
            <person name="Plumb B."/>
            <person name="Davis J."/>
            <person name="Clee C."/>
            <person name="Oliver K."/>
            <person name="Clark R."/>
            <person name="Riddle C."/>
            <person name="Elliot D."/>
            <person name="Threadgold G."/>
            <person name="Harden G."/>
            <person name="Ware D."/>
            <person name="Begum S."/>
            <person name="Mortimore B."/>
            <person name="Kerry G."/>
            <person name="Heath P."/>
            <person name="Phillimore B."/>
            <person name="Tracey A."/>
            <person name="Corby N."/>
            <person name="Dunn M."/>
            <person name="Johnson C."/>
            <person name="Wood J."/>
            <person name="Clark S."/>
            <person name="Pelan S."/>
            <person name="Griffiths G."/>
            <person name="Smith M."/>
            <person name="Glithero R."/>
            <person name="Howden P."/>
            <person name="Barker N."/>
            <person name="Lloyd C."/>
            <person name="Stevens C."/>
            <person name="Harley J."/>
            <person name="Holt K."/>
            <person name="Panagiotidis G."/>
            <person name="Lovell J."/>
            <person name="Beasley H."/>
            <person name="Henderson C."/>
            <person name="Gordon D."/>
            <person name="Auger K."/>
            <person name="Wright D."/>
            <person name="Collins J."/>
            <person name="Raisen C."/>
            <person name="Dyer L."/>
            <person name="Leung K."/>
            <person name="Robertson L."/>
            <person name="Ambridge K."/>
            <person name="Leongamornlert D."/>
            <person name="McGuire S."/>
            <person name="Gilderthorp R."/>
            <person name="Griffiths C."/>
            <person name="Manthravadi D."/>
            <person name="Nichol S."/>
            <person name="Barker G."/>
            <person name="Whitehead S."/>
            <person name="Kay M."/>
            <person name="Brown J."/>
            <person name="Murnane C."/>
            <person name="Gray E."/>
            <person name="Humphries M."/>
            <person name="Sycamore N."/>
            <person name="Barker D."/>
            <person name="Saunders D."/>
            <person name="Wallis J."/>
            <person name="Babbage A."/>
            <person name="Hammond S."/>
            <person name="Mashreghi-Mohammadi M."/>
            <person name="Barr L."/>
            <person name="Martin S."/>
            <person name="Wray P."/>
            <person name="Ellington A."/>
            <person name="Matthews N."/>
            <person name="Ellwood M."/>
            <person name="Woodmansey R."/>
            <person name="Clark G."/>
            <person name="Cooper J."/>
            <person name="Tromans A."/>
            <person name="Grafham D."/>
            <person name="Skuce C."/>
            <person name="Pandian R."/>
            <person name="Andrews R."/>
            <person name="Harrison E."/>
            <person name="Kimberley A."/>
            <person name="Garnett J."/>
            <person name="Fosker N."/>
            <person name="Hall R."/>
            <person name="Garner P."/>
            <person name="Kelly D."/>
            <person name="Bird C."/>
            <person name="Palmer S."/>
            <person name="Gehring I."/>
            <person name="Berger A."/>
            <person name="Dooley C.M."/>
            <person name="Ersan-Urun Z."/>
            <person name="Eser C."/>
            <person name="Geiger H."/>
            <person name="Geisler M."/>
            <person name="Karotki L."/>
            <person name="Kirn A."/>
            <person name="Konantz J."/>
            <person name="Konantz M."/>
            <person name="Oberlander M."/>
            <person name="Rudolph-Geiger S."/>
            <person name="Teucke M."/>
            <person name="Lanz C."/>
            <person name="Raddatz G."/>
            <person name="Osoegawa K."/>
            <person name="Zhu B."/>
            <person name="Rapp A."/>
            <person name="Widaa S."/>
            <person name="Langford C."/>
            <person name="Yang F."/>
            <person name="Schuster S.C."/>
            <person name="Carter N.P."/>
            <person name="Harrow J."/>
            <person name="Ning Z."/>
            <person name="Herrero J."/>
            <person name="Searle S.M."/>
            <person name="Enright A."/>
            <person name="Geisler R."/>
            <person name="Plasterk R.H."/>
            <person name="Lee C."/>
            <person name="Westerfield M."/>
            <person name="de Jong P.J."/>
            <person name="Zon L.I."/>
            <person name="Postlethwait J.H."/>
            <person name="Nusslein-Volhard C."/>
            <person name="Hubbard T.J."/>
            <person name="Roest Crollius H."/>
            <person name="Rogers J."/>
            <person name="Stemple D.L."/>
        </authorList>
    </citation>
    <scope>NUCLEOTIDE SEQUENCE [LARGE SCALE GENOMIC DNA]</scope>
    <source>
        <strain>Tuebingen</strain>
    </source>
</reference>
<reference key="2">
    <citation type="journal article" date="2024" name="Cell Res.">
        <title>MFSD7c functions as a transporter of choline at the blood-brain barrier.</title>
        <authorList>
            <person name="Nguyen X.T.A."/>
            <person name="Le T.N.U."/>
            <person name="Nguyen T.Q."/>
            <person name="Thi Thuy Ha H."/>
            <person name="Artati A."/>
            <person name="Leong N.C.P."/>
            <person name="Nguyen D.T."/>
            <person name="Lim P.Y."/>
            <person name="Susanto A.V."/>
            <person name="Huang Q."/>
            <person name="Fam L."/>
            <person name="Leong L.N."/>
            <person name="Bonne I."/>
            <person name="Lee A."/>
            <person name="Granadillo J.L."/>
            <person name="Gooch C."/>
            <person name="Yu D."/>
            <person name="Huang H."/>
            <person name="Soong T.W."/>
            <person name="Chang M.W."/>
            <person name="Wenk M.R."/>
            <person name="Adamski J."/>
            <person name="Cazenave-Gassiot A."/>
            <person name="Nguyen L.N."/>
        </authorList>
    </citation>
    <scope>FUNCTION</scope>
    <scope>TRANSPORTER ACTIVITY</scope>
</reference>
<evidence type="ECO:0000250" key="1">
    <source>
        <dbReference type="UniProtKB" id="Q91X85"/>
    </source>
</evidence>
<evidence type="ECO:0000250" key="2">
    <source>
        <dbReference type="UniProtKB" id="Q9UPI3"/>
    </source>
</evidence>
<evidence type="ECO:0000255" key="3"/>
<evidence type="ECO:0000269" key="4">
    <source>
    </source>
</evidence>
<evidence type="ECO:0000303" key="5">
    <source>
    </source>
</evidence>
<evidence type="ECO:0000305" key="6"/>
<evidence type="ECO:0000312" key="7">
    <source>
        <dbReference type="ZFIN" id="ZDB-GENE-041210-312"/>
    </source>
</evidence>
<name>FLC2B_DANRE</name>
<sequence length="485" mass="54005">MDTRFNDINRVKMGDESKSVDGEVNDNTYYSKTDAEVNFEHRYTTPETRLYKKRWVIVCLFSSYSLCNSYQWIQYGIINNIFMRFYGVDSFTIDWMSMIYMLTYIPLIFPVSWLLDKKGLRVIALVAAALNCAGTWIKVASARPDLFPVTFLGQFTCSVAQVFILGMPSRIASVWFGSDEVSTACSIGVFGNQLGIAIGFLVPPILVPNVDDLDELAAHIRVMFYITAGVATFLFVLVVIVFQERPEIPPTLAQAAARRISPESYSYTASILRLLRNKAFILLVITYGLNVGCFYAVSTLLNRMIIEHYPGEEVNAGRIGLTIVVAGMVGSLICGIWLDRSKTYKQTTLAVYLMSLMGLVIYAFTLDLHHLWVVFITAGALGFFMTGYLPLGFEFAVELTYPESEGTSSGLLNCSAQVFGIIFTICQGKIMDSFGTLAGNLFLCAFLLIGTIITGCIKSDLRRQLANQQAQTADHLDTSPTQTRF</sequence>